<evidence type="ECO:0000255" key="1">
    <source>
        <dbReference type="HAMAP-Rule" id="MF_00672"/>
    </source>
</evidence>
<evidence type="ECO:0000256" key="2">
    <source>
        <dbReference type="SAM" id="MobiDB-lite"/>
    </source>
</evidence>
<proteinExistence type="inferred from homology"/>
<organism>
    <name type="scientific">Vibrio parahaemolyticus serotype O3:K6 (strain RIMD 2210633)</name>
    <dbReference type="NCBI Taxonomy" id="223926"/>
    <lineage>
        <taxon>Bacteria</taxon>
        <taxon>Pseudomonadati</taxon>
        <taxon>Pseudomonadota</taxon>
        <taxon>Gammaproteobacteria</taxon>
        <taxon>Vibrionales</taxon>
        <taxon>Vibrionaceae</taxon>
        <taxon>Vibrio</taxon>
    </lineage>
</organism>
<sequence length="314" mass="34583">MNQLSESYKARLSNLLPSCVAFFKYLLKRLTHDRVNVNAGYLAYITLLSIVPMLTVLLSILSKFPVFANVGEVLQGYIIENFVPASGEAVHTALQEFVANTGKMSAVGGGFLFIAALMLISNIDKNLNYIWRVKDKRRLVFSFSMYWMVLTLGPILVGASIAATSYVTSLQILENETLSGAFNLFLRWLPLLLSFFAFLGLYILVPNKKVHLAHGAVGAAVAAILFELSKKGFALYITQFPSYQLIYGALAAIPILFVWVYLCWMIVLLGAEVTAALGEQEHWSEDLDMIHSSAESQLANEGSESSDSANSTSQ</sequence>
<comment type="subcellular location">
    <subcellularLocation>
        <location evidence="1">Cell inner membrane</location>
        <topology evidence="1">Multi-pass membrane protein</topology>
    </subcellularLocation>
</comment>
<comment type="similarity">
    <text evidence="1">Belongs to the UPF0761 family.</text>
</comment>
<accession>Q87TE5</accession>
<reference key="1">
    <citation type="journal article" date="2003" name="Lancet">
        <title>Genome sequence of Vibrio parahaemolyticus: a pathogenic mechanism distinct from that of V. cholerae.</title>
        <authorList>
            <person name="Makino K."/>
            <person name="Oshima K."/>
            <person name="Kurokawa K."/>
            <person name="Yokoyama K."/>
            <person name="Uda T."/>
            <person name="Tagomori K."/>
            <person name="Iijima Y."/>
            <person name="Najima M."/>
            <person name="Nakano M."/>
            <person name="Yamashita A."/>
            <person name="Kubota Y."/>
            <person name="Kimura S."/>
            <person name="Yasunaga T."/>
            <person name="Honda T."/>
            <person name="Shinagawa H."/>
            <person name="Hattori M."/>
            <person name="Iida T."/>
        </authorList>
    </citation>
    <scope>NUCLEOTIDE SEQUENCE [LARGE SCALE GENOMIC DNA]</scope>
    <source>
        <strain>RIMD 2210633</strain>
    </source>
</reference>
<feature type="chain" id="PRO_0000201000" description="UPF0761 membrane protein VP0125">
    <location>
        <begin position="1"/>
        <end position="314"/>
    </location>
</feature>
<feature type="transmembrane region" description="Helical" evidence="1">
    <location>
        <begin position="41"/>
        <end position="61"/>
    </location>
</feature>
<feature type="transmembrane region" description="Helical" evidence="1">
    <location>
        <begin position="104"/>
        <end position="124"/>
    </location>
</feature>
<feature type="transmembrane region" description="Helical" evidence="1">
    <location>
        <begin position="139"/>
        <end position="159"/>
    </location>
</feature>
<feature type="transmembrane region" description="Helical" evidence="1">
    <location>
        <begin position="185"/>
        <end position="205"/>
    </location>
</feature>
<feature type="transmembrane region" description="Helical" evidence="1">
    <location>
        <begin position="217"/>
        <end position="237"/>
    </location>
</feature>
<feature type="transmembrane region" description="Helical" evidence="1">
    <location>
        <begin position="249"/>
        <end position="269"/>
    </location>
</feature>
<feature type="region of interest" description="Disordered" evidence="2">
    <location>
        <begin position="295"/>
        <end position="314"/>
    </location>
</feature>
<keyword id="KW-0997">Cell inner membrane</keyword>
<keyword id="KW-1003">Cell membrane</keyword>
<keyword id="KW-0472">Membrane</keyword>
<keyword id="KW-0812">Transmembrane</keyword>
<keyword id="KW-1133">Transmembrane helix</keyword>
<gene>
    <name type="ordered locus">VP0125</name>
</gene>
<protein>
    <recommendedName>
        <fullName evidence="1">UPF0761 membrane protein VP0125</fullName>
    </recommendedName>
</protein>
<name>Y125_VIBPA</name>
<dbReference type="EMBL" id="BA000031">
    <property type="protein sequence ID" value="BAC58388.1"/>
    <property type="molecule type" value="Genomic_DNA"/>
</dbReference>
<dbReference type="RefSeq" id="NP_796504.1">
    <property type="nucleotide sequence ID" value="NC_004603.1"/>
</dbReference>
<dbReference type="RefSeq" id="WP_005456793.1">
    <property type="nucleotide sequence ID" value="NC_004603.1"/>
</dbReference>
<dbReference type="DNASU" id="1187592"/>
<dbReference type="GeneID" id="1187592"/>
<dbReference type="KEGG" id="vpa:VP0125"/>
<dbReference type="PATRIC" id="fig|223926.6.peg.117"/>
<dbReference type="eggNOG" id="COG1295">
    <property type="taxonomic scope" value="Bacteria"/>
</dbReference>
<dbReference type="HOGENOM" id="CLU_032288_0_0_6"/>
<dbReference type="Proteomes" id="UP000002493">
    <property type="component" value="Chromosome 1"/>
</dbReference>
<dbReference type="GO" id="GO:0005886">
    <property type="term" value="C:plasma membrane"/>
    <property type="evidence" value="ECO:0007669"/>
    <property type="project" value="UniProtKB-SubCell"/>
</dbReference>
<dbReference type="HAMAP" id="MF_00672">
    <property type="entry name" value="UPF0761"/>
    <property type="match status" value="1"/>
</dbReference>
<dbReference type="InterPro" id="IPR023679">
    <property type="entry name" value="UPF0761_bac"/>
</dbReference>
<dbReference type="InterPro" id="IPR017039">
    <property type="entry name" value="Virul_fac_BrkB"/>
</dbReference>
<dbReference type="NCBIfam" id="NF002457">
    <property type="entry name" value="PRK01637.1"/>
    <property type="match status" value="1"/>
</dbReference>
<dbReference type="NCBIfam" id="TIGR00765">
    <property type="entry name" value="yihY_not_rbn"/>
    <property type="match status" value="1"/>
</dbReference>
<dbReference type="PANTHER" id="PTHR30213">
    <property type="entry name" value="INNER MEMBRANE PROTEIN YHJD"/>
    <property type="match status" value="1"/>
</dbReference>
<dbReference type="PANTHER" id="PTHR30213:SF0">
    <property type="entry name" value="UPF0761 MEMBRANE PROTEIN YIHY"/>
    <property type="match status" value="1"/>
</dbReference>
<dbReference type="Pfam" id="PF03631">
    <property type="entry name" value="Virul_fac_BrkB"/>
    <property type="match status" value="1"/>
</dbReference>
<dbReference type="PIRSF" id="PIRSF035875">
    <property type="entry name" value="RNase_BN"/>
    <property type="match status" value="1"/>
</dbReference>